<feature type="chain" id="PRO_0000276610" description="Small ribosomal subunit protein uS12cz/uS12cy">
    <location>
        <begin position="1"/>
        <end position="123"/>
    </location>
</feature>
<evidence type="ECO:0000250" key="1"/>
<evidence type="ECO:0000255" key="2">
    <source>
        <dbReference type="HAMAP-Rule" id="MF_00403"/>
    </source>
</evidence>
<evidence type="ECO:0000305" key="3"/>
<geneLocation type="chloroplast"/>
<gene>
    <name type="primary">rps12-A</name>
</gene>
<gene>
    <name type="primary">rps12-B</name>
</gene>
<keyword id="KW-0150">Chloroplast</keyword>
<keyword id="KW-0934">Plastid</keyword>
<keyword id="KW-0687">Ribonucleoprotein</keyword>
<keyword id="KW-0689">Ribosomal protein</keyword>
<keyword id="KW-0694">RNA-binding</keyword>
<keyword id="KW-0699">rRNA-binding</keyword>
<comment type="function">
    <text evidence="1">With S4 and S5 plays an important role in translational accuracy. Located at the interface of the 30S and 50S subunits (By similarity).</text>
</comment>
<comment type="subunit">
    <text evidence="1">Part of the 30S ribosomal subunit.</text>
</comment>
<comment type="subcellular location">
    <subcellularLocation>
        <location>Plastid</location>
        <location>Chloroplast</location>
    </subcellularLocation>
</comment>
<comment type="similarity">
    <text evidence="3">Belongs to the universal ribosomal protein uS12 family.</text>
</comment>
<protein>
    <recommendedName>
        <fullName evidence="2">Small ribosomal subunit protein uS12cz/uS12cy</fullName>
    </recommendedName>
    <alternativeName>
        <fullName evidence="3">30S ribosomal protein S12, chloroplastic</fullName>
    </alternativeName>
</protein>
<proteinExistence type="inferred from homology"/>
<name>RR12_DRIGR</name>
<reference key="1">
    <citation type="journal article" date="2006" name="BMC Evol. Biol.">
        <title>Complete plastid genome sequences of Drimys, Liriodendron, and Piper: implications for the phylogenetic relationships of magnoliids.</title>
        <authorList>
            <person name="Cai Z."/>
            <person name="Penaflor C."/>
            <person name="Kuehl J.V."/>
            <person name="Leebens-Mack J."/>
            <person name="Carlson J.E."/>
            <person name="dePamphilis C.W."/>
            <person name="Boore J.L."/>
            <person name="Jansen R.K."/>
        </authorList>
    </citation>
    <scope>NUCLEOTIDE SEQUENCE [LARGE SCALE GENOMIC DNA]</scope>
</reference>
<organism>
    <name type="scientific">Drimys granadensis</name>
    <dbReference type="NCBI Taxonomy" id="224735"/>
    <lineage>
        <taxon>Eukaryota</taxon>
        <taxon>Viridiplantae</taxon>
        <taxon>Streptophyta</taxon>
        <taxon>Embryophyta</taxon>
        <taxon>Tracheophyta</taxon>
        <taxon>Spermatophyta</taxon>
        <taxon>Magnoliopsida</taxon>
        <taxon>Magnoliidae</taxon>
        <taxon>Canellales</taxon>
        <taxon>Winteraceae</taxon>
        <taxon>Drimys</taxon>
    </lineage>
</organism>
<dbReference type="EMBL" id="DQ887676">
    <property type="protein sequence ID" value="ABH88344.1"/>
    <property type="molecule type" value="Genomic_DNA"/>
</dbReference>
<dbReference type="EMBL" id="DQ887676">
    <property type="protein sequence ID" value="ABH88357.1"/>
    <property type="molecule type" value="Genomic_DNA"/>
</dbReference>
<dbReference type="SMR" id="Q06GX3"/>
<dbReference type="GO" id="GO:0009507">
    <property type="term" value="C:chloroplast"/>
    <property type="evidence" value="ECO:0007669"/>
    <property type="project" value="UniProtKB-SubCell"/>
</dbReference>
<dbReference type="GO" id="GO:0015935">
    <property type="term" value="C:small ribosomal subunit"/>
    <property type="evidence" value="ECO:0007669"/>
    <property type="project" value="InterPro"/>
</dbReference>
<dbReference type="GO" id="GO:0019843">
    <property type="term" value="F:rRNA binding"/>
    <property type="evidence" value="ECO:0007669"/>
    <property type="project" value="UniProtKB-UniRule"/>
</dbReference>
<dbReference type="GO" id="GO:0003735">
    <property type="term" value="F:structural constituent of ribosome"/>
    <property type="evidence" value="ECO:0007669"/>
    <property type="project" value="InterPro"/>
</dbReference>
<dbReference type="GO" id="GO:0006412">
    <property type="term" value="P:translation"/>
    <property type="evidence" value="ECO:0007669"/>
    <property type="project" value="UniProtKB-UniRule"/>
</dbReference>
<dbReference type="CDD" id="cd03368">
    <property type="entry name" value="Ribosomal_S12"/>
    <property type="match status" value="1"/>
</dbReference>
<dbReference type="FunFam" id="2.40.50.140:FF:000008">
    <property type="entry name" value="30S ribosomal protein S12, chloroplastic"/>
    <property type="match status" value="1"/>
</dbReference>
<dbReference type="Gene3D" id="2.40.50.140">
    <property type="entry name" value="Nucleic acid-binding proteins"/>
    <property type="match status" value="1"/>
</dbReference>
<dbReference type="HAMAP" id="MF_00403_B">
    <property type="entry name" value="Ribosomal_uS12_B"/>
    <property type="match status" value="1"/>
</dbReference>
<dbReference type="InterPro" id="IPR012340">
    <property type="entry name" value="NA-bd_OB-fold"/>
</dbReference>
<dbReference type="InterPro" id="IPR006032">
    <property type="entry name" value="Ribosomal_uS12"/>
</dbReference>
<dbReference type="InterPro" id="IPR005679">
    <property type="entry name" value="Ribosomal_uS12_bac"/>
</dbReference>
<dbReference type="NCBIfam" id="TIGR00981">
    <property type="entry name" value="rpsL_bact"/>
    <property type="match status" value="1"/>
</dbReference>
<dbReference type="PANTHER" id="PTHR11652">
    <property type="entry name" value="30S RIBOSOMAL PROTEIN S12 FAMILY MEMBER"/>
    <property type="match status" value="1"/>
</dbReference>
<dbReference type="Pfam" id="PF00164">
    <property type="entry name" value="Ribosom_S12_S23"/>
    <property type="match status" value="1"/>
</dbReference>
<dbReference type="PIRSF" id="PIRSF002133">
    <property type="entry name" value="Ribosomal_S12/S23"/>
    <property type="match status" value="1"/>
</dbReference>
<dbReference type="PRINTS" id="PR01034">
    <property type="entry name" value="RIBOSOMALS12"/>
</dbReference>
<dbReference type="SUPFAM" id="SSF50249">
    <property type="entry name" value="Nucleic acid-binding proteins"/>
    <property type="match status" value="1"/>
</dbReference>
<dbReference type="PROSITE" id="PS00055">
    <property type="entry name" value="RIBOSOMAL_S12"/>
    <property type="match status" value="1"/>
</dbReference>
<sequence length="123" mass="13736">MPTIKQLIRNTRQPIKNVTKSPALRGCPQRRGTCTRVYTITPKKPNSALRKVARVRLTSGFEITAYIPGIGHNLQEHSVVLVRGGRVKDLPGVRYHIVRGTLDAVGVKDRQQGRSKYGVKKPK</sequence>
<accession>Q06GX3</accession>